<geneLocation type="chloroplast"/>
<reference key="1">
    <citation type="journal article" date="2003" name="Plant Syst. Evol.">
        <title>The chloroplast genome of the 'basal' angiosperm Calycanthus fertilis -- structural and phylogenetic analyses.</title>
        <authorList>
            <person name="Goremykin V."/>
            <person name="Hirsch-Ernst K.I."/>
            <person name="Woelfl S."/>
            <person name="Hellwig F.H."/>
        </authorList>
    </citation>
    <scope>NUCLEOTIDE SEQUENCE [LARGE SCALE GENOMIC DNA]</scope>
</reference>
<accession>Q7HKX7</accession>
<protein>
    <recommendedName>
        <fullName evidence="1">Cytochrome b559 subunit beta</fullName>
    </recommendedName>
    <alternativeName>
        <fullName evidence="1">PSII reaction center subunit VI</fullName>
    </alternativeName>
</protein>
<organism>
    <name type="scientific">Calycanthus floridus var. glaucus</name>
    <name type="common">Eastern sweetshrub</name>
    <name type="synonym">Calycanthus fertilis var. ferax</name>
    <dbReference type="NCBI Taxonomy" id="212734"/>
    <lineage>
        <taxon>Eukaryota</taxon>
        <taxon>Viridiplantae</taxon>
        <taxon>Streptophyta</taxon>
        <taxon>Embryophyta</taxon>
        <taxon>Tracheophyta</taxon>
        <taxon>Spermatophyta</taxon>
        <taxon>Magnoliopsida</taxon>
        <taxon>Magnoliidae</taxon>
        <taxon>Laurales</taxon>
        <taxon>Calycanthaceae</taxon>
        <taxon>Calycanthus</taxon>
    </lineage>
</organism>
<sequence>MTIDRTYPIFTVRWLAVHGLAVPTVSFLGSISAMQFIQR</sequence>
<gene>
    <name evidence="1" type="primary">psbF</name>
</gene>
<name>PSBF_CALFG</name>
<keyword id="KW-0150">Chloroplast</keyword>
<keyword id="KW-0249">Electron transport</keyword>
<keyword id="KW-0349">Heme</keyword>
<keyword id="KW-0408">Iron</keyword>
<keyword id="KW-0472">Membrane</keyword>
<keyword id="KW-0479">Metal-binding</keyword>
<keyword id="KW-0602">Photosynthesis</keyword>
<keyword id="KW-0604">Photosystem II</keyword>
<keyword id="KW-0934">Plastid</keyword>
<keyword id="KW-0793">Thylakoid</keyword>
<keyword id="KW-0812">Transmembrane</keyword>
<keyword id="KW-1133">Transmembrane helix</keyword>
<keyword id="KW-0813">Transport</keyword>
<proteinExistence type="inferred from homology"/>
<evidence type="ECO:0000255" key="1">
    <source>
        <dbReference type="HAMAP-Rule" id="MF_00643"/>
    </source>
</evidence>
<feature type="chain" id="PRO_0000200364" description="Cytochrome b559 subunit beta">
    <location>
        <begin position="1"/>
        <end position="39"/>
    </location>
</feature>
<feature type="transmembrane region" description="Helical" evidence="1">
    <location>
        <begin position="14"/>
        <end position="30"/>
    </location>
</feature>
<feature type="binding site" description="axial binding residue" evidence="1">
    <location>
        <position position="18"/>
    </location>
    <ligand>
        <name>heme</name>
        <dbReference type="ChEBI" id="CHEBI:30413"/>
        <note>ligand shared with alpha subunit</note>
    </ligand>
    <ligandPart>
        <name>Fe</name>
        <dbReference type="ChEBI" id="CHEBI:18248"/>
    </ligandPart>
</feature>
<comment type="function">
    <text evidence="1">This b-type cytochrome is tightly associated with the reaction center of photosystem II (PSII). PSII is a light-driven water:plastoquinone oxidoreductase that uses light energy to abstract electrons from H(2)O, generating O(2) and a proton gradient subsequently used for ATP formation. It consists of a core antenna complex that captures photons, and an electron transfer chain that converts photonic excitation into a charge separation.</text>
</comment>
<comment type="cofactor">
    <cofactor evidence="1">
        <name>heme b</name>
        <dbReference type="ChEBI" id="CHEBI:60344"/>
    </cofactor>
    <text evidence="1">With its partner (PsbE) binds heme. PSII binds additional chlorophylls, carotenoids and specific lipids.</text>
</comment>
<comment type="subunit">
    <text evidence="1">Heterodimer of an alpha subunit and a beta subunit. PSII is composed of 1 copy each of membrane proteins PsbA, PsbB, PsbC, PsbD, PsbE, PsbF, PsbH, PsbI, PsbJ, PsbK, PsbL, PsbM, PsbT, PsbX, PsbY, PsbZ, Psb30/Ycf12, at least 3 peripheral proteins of the oxygen-evolving complex and a large number of cofactors. It forms dimeric complexes.</text>
</comment>
<comment type="subcellular location">
    <subcellularLocation>
        <location evidence="1">Plastid</location>
        <location evidence="1">Chloroplast thylakoid membrane</location>
        <topology evidence="1">Single-pass membrane protein</topology>
    </subcellularLocation>
</comment>
<comment type="similarity">
    <text evidence="1">Belongs to the PsbE/PsbF family.</text>
</comment>
<dbReference type="EMBL" id="AJ428413">
    <property type="protein sequence ID" value="CAD28737.1"/>
    <property type="molecule type" value="Genomic_DNA"/>
</dbReference>
<dbReference type="RefSeq" id="NP_862770.1">
    <property type="nucleotide sequence ID" value="NC_004993.1"/>
</dbReference>
<dbReference type="SMR" id="Q7HKX7"/>
<dbReference type="GeneID" id="2598010"/>
<dbReference type="GO" id="GO:0009535">
    <property type="term" value="C:chloroplast thylakoid membrane"/>
    <property type="evidence" value="ECO:0007669"/>
    <property type="project" value="UniProtKB-SubCell"/>
</dbReference>
<dbReference type="GO" id="GO:0009539">
    <property type="term" value="C:photosystem II reaction center"/>
    <property type="evidence" value="ECO:0007669"/>
    <property type="project" value="InterPro"/>
</dbReference>
<dbReference type="GO" id="GO:0009055">
    <property type="term" value="F:electron transfer activity"/>
    <property type="evidence" value="ECO:0007669"/>
    <property type="project" value="UniProtKB-UniRule"/>
</dbReference>
<dbReference type="GO" id="GO:0020037">
    <property type="term" value="F:heme binding"/>
    <property type="evidence" value="ECO:0007669"/>
    <property type="project" value="InterPro"/>
</dbReference>
<dbReference type="GO" id="GO:0005506">
    <property type="term" value="F:iron ion binding"/>
    <property type="evidence" value="ECO:0007669"/>
    <property type="project" value="UniProtKB-UniRule"/>
</dbReference>
<dbReference type="GO" id="GO:0009767">
    <property type="term" value="P:photosynthetic electron transport chain"/>
    <property type="evidence" value="ECO:0007669"/>
    <property type="project" value="InterPro"/>
</dbReference>
<dbReference type="HAMAP" id="MF_00643">
    <property type="entry name" value="PSII_PsbF"/>
    <property type="match status" value="1"/>
</dbReference>
<dbReference type="InterPro" id="IPR006241">
    <property type="entry name" value="PSII_cyt_b559_bsu"/>
</dbReference>
<dbReference type="InterPro" id="IPR006216">
    <property type="entry name" value="PSII_cyt_b559_CS"/>
</dbReference>
<dbReference type="InterPro" id="IPR013081">
    <property type="entry name" value="PSII_cyt_b559_N"/>
</dbReference>
<dbReference type="NCBIfam" id="TIGR01333">
    <property type="entry name" value="cyt_b559_beta"/>
    <property type="match status" value="1"/>
</dbReference>
<dbReference type="Pfam" id="PF00283">
    <property type="entry name" value="Cytochrom_B559"/>
    <property type="match status" value="1"/>
</dbReference>
<dbReference type="PIRSF" id="PIRSF000037">
    <property type="entry name" value="PsbF"/>
    <property type="match status" value="1"/>
</dbReference>
<dbReference type="SUPFAM" id="SSF161045">
    <property type="entry name" value="Cytochrome b559 subunits"/>
    <property type="match status" value="1"/>
</dbReference>
<dbReference type="PROSITE" id="PS00537">
    <property type="entry name" value="CYTOCHROME_B559"/>
    <property type="match status" value="1"/>
</dbReference>